<protein>
    <recommendedName>
        <fullName evidence="7">Quinone-oxidoreductase QR2</fullName>
        <shortName evidence="7">TvQR2</shortName>
        <ecNumber evidence="6">1.6.5.2</ecNumber>
    </recommendedName>
</protein>
<accession>Q9AYU0</accession>
<keyword id="KW-0285">Flavoprotein</keyword>
<keyword id="KW-0288">FMN</keyword>
<keyword id="KW-0520">NAD</keyword>
<keyword id="KW-0521">NADP</keyword>
<keyword id="KW-0547">Nucleotide-binding</keyword>
<keyword id="KW-0560">Oxidoreductase</keyword>
<feature type="chain" id="PRO_0000439503" description="Quinone-oxidoreductase QR2">
    <location>
        <begin position="1"/>
        <end position="205"/>
    </location>
</feature>
<feature type="domain" description="Flavodoxin-like" evidence="3">
    <location>
        <begin position="5"/>
        <end position="192"/>
    </location>
</feature>
<feature type="binding site" evidence="3">
    <location>
        <begin position="11"/>
        <end position="15"/>
    </location>
    <ligand>
        <name>FMN</name>
        <dbReference type="ChEBI" id="CHEBI:58210"/>
    </ligand>
</feature>
<feature type="binding site" evidence="1">
    <location>
        <position position="13"/>
    </location>
    <ligand>
        <name>NAD(+)</name>
        <dbReference type="ChEBI" id="CHEBI:57540"/>
    </ligand>
</feature>
<feature type="binding site" evidence="3">
    <location>
        <begin position="112"/>
        <end position="165"/>
    </location>
    <ligand>
        <name>FMN</name>
        <dbReference type="ChEBI" id="CHEBI:58210"/>
    </ligand>
</feature>
<feature type="binding site" evidence="1">
    <location>
        <position position="136"/>
    </location>
    <ligand>
        <name>FMN</name>
        <dbReference type="ChEBI" id="CHEBI:58210"/>
    </ligand>
</feature>
<comment type="function">
    <text evidence="4 6">NAD(P)H:quinone oxidoreductase reducing quinones by a two-electron transfer mechanism (PubMed:11260494, Ref.2). Can use either NADPH or NADH as electron donor (Ref.2). Can use menadione, 5-hydroxy-1,4-naphthoquinone (juglone) and 2,6-dimethoxy-p-benzoquinone (DMBQ) as substrates (Ref.2). Mitigates the toxicity of exogenous quinones in the rhizosphere (Ref.2).</text>
</comment>
<comment type="catalytic activity">
    <reaction evidence="6">
        <text>a quinone + NADH + H(+) = a quinol + NAD(+)</text>
        <dbReference type="Rhea" id="RHEA:46160"/>
        <dbReference type="ChEBI" id="CHEBI:15378"/>
        <dbReference type="ChEBI" id="CHEBI:24646"/>
        <dbReference type="ChEBI" id="CHEBI:57540"/>
        <dbReference type="ChEBI" id="CHEBI:57945"/>
        <dbReference type="ChEBI" id="CHEBI:132124"/>
        <dbReference type="EC" id="1.6.5.2"/>
    </reaction>
</comment>
<comment type="catalytic activity">
    <reaction evidence="6">
        <text>a quinone + NADPH + H(+) = a quinol + NADP(+)</text>
        <dbReference type="Rhea" id="RHEA:46164"/>
        <dbReference type="ChEBI" id="CHEBI:15378"/>
        <dbReference type="ChEBI" id="CHEBI:24646"/>
        <dbReference type="ChEBI" id="CHEBI:57783"/>
        <dbReference type="ChEBI" id="CHEBI:58349"/>
        <dbReference type="ChEBI" id="CHEBI:132124"/>
        <dbReference type="EC" id="1.6.5.2"/>
    </reaction>
</comment>
<comment type="cofactor">
    <cofactor evidence="2">
        <name>FMN</name>
        <dbReference type="ChEBI" id="CHEBI:58210"/>
    </cofactor>
    <text evidence="2">Binds 1 FMN per monomer.</text>
</comment>
<comment type="activity regulation">
    <text evidence="6">Inhibited by dicumarol.</text>
</comment>
<comment type="biophysicochemical properties">
    <phDependence>
        <text evidence="6">Optimum pH is 6.5.</text>
    </phDependence>
</comment>
<comment type="induction">
    <text evidence="4 5">Up-regulated by 2,6-dimethoxy-p-benzoquinone (DMBQ), 2,6-dimethylbenzoquinone and menadione (PubMed:11260494, PubMed:20424175). Not regulated by host root contact (PubMed:20424175).</text>
</comment>
<comment type="similarity">
    <text evidence="8">Belongs to the WrbA family.</text>
</comment>
<proteinExistence type="evidence at protein level"/>
<name>QR2_TRIVS</name>
<reference key="1">
    <citation type="journal article" date="2001" name="Plant J.">
        <title>Quinone oxidoreductase message levels are differentially regulated in parasitic and non-parasitic plants exposed to allelopathic quinones.</title>
        <authorList>
            <person name="Matvienko M."/>
            <person name="Wojtowicz A."/>
            <person name="Wrobel R."/>
            <person name="Jamison D."/>
            <person name="Goldwasser Y."/>
            <person name="Yoder J.I."/>
        </authorList>
    </citation>
    <scope>NUCLEOTIDE SEQUENCE [MRNA]</scope>
    <scope>FUNCTION</scope>
    <scope>INDUCTION BY QUINONES</scope>
    <source>
        <tissue>Root</tissue>
    </source>
</reference>
<reference key="2">
    <citation type="journal article" date="2002" name="Plant Physiol. Biochem.">
        <title>Heterologous expression and biochemical characterization of an NAD(P)H:quinone oxidoreductase from the hemiparasitic plant Triphysaria versicolor.</title>
        <authorList>
            <person name="Wrobel R.L."/>
            <person name="Matvienko M."/>
            <person name="Yoder J.I."/>
        </authorList>
    </citation>
    <scope>FUNCTION</scope>
    <scope>SUBSTRATE SPECIFICITY</scope>
    <scope>CATALYTIC ACTIVITY</scope>
    <scope>BIOPHYSICOCHEMICAL PROPERTIES</scope>
    <scope>ACTIVITY REGULATION</scope>
</reference>
<reference key="3">
    <citation type="journal article" date="2010" name="Plant Cell">
        <title>A single-electron reducing quinone oxidoreductase is necessary to induce haustorium development in the root parasitic plant Triphysaria.</title>
        <authorList>
            <person name="Bandaranayake P.C."/>
            <person name="Filappova T."/>
            <person name="Tomilov A."/>
            <person name="Tomilova N.B."/>
            <person name="Jamison-McClung D."/>
            <person name="Ngo Q."/>
            <person name="Inoue K."/>
            <person name="Yoder J.I."/>
        </authorList>
    </citation>
    <scope>INDUCTION BY ROOT CONTACT</scope>
</reference>
<dbReference type="EC" id="1.6.5.2" evidence="6"/>
<dbReference type="EMBL" id="AF304462">
    <property type="protein sequence ID" value="AAG53945.1"/>
    <property type="molecule type" value="mRNA"/>
</dbReference>
<dbReference type="SMR" id="Q9AYU0"/>
<dbReference type="GO" id="GO:0016020">
    <property type="term" value="C:membrane"/>
    <property type="evidence" value="ECO:0007669"/>
    <property type="project" value="TreeGrafter"/>
</dbReference>
<dbReference type="GO" id="GO:0010181">
    <property type="term" value="F:FMN binding"/>
    <property type="evidence" value="ECO:0007669"/>
    <property type="project" value="InterPro"/>
</dbReference>
<dbReference type="GO" id="GO:0050136">
    <property type="term" value="F:NADH:ubiquinone reductase (non-electrogenic) activity"/>
    <property type="evidence" value="ECO:0007669"/>
    <property type="project" value="RHEA"/>
</dbReference>
<dbReference type="GO" id="GO:0008753">
    <property type="term" value="F:NADPH dehydrogenase (quinone) activity"/>
    <property type="evidence" value="ECO:0007669"/>
    <property type="project" value="RHEA"/>
</dbReference>
<dbReference type="FunFam" id="3.40.50.360:FF:000001">
    <property type="entry name" value="NAD(P)H dehydrogenase (Quinone) FQR1-like"/>
    <property type="match status" value="1"/>
</dbReference>
<dbReference type="Gene3D" id="3.40.50.360">
    <property type="match status" value="1"/>
</dbReference>
<dbReference type="InterPro" id="IPR008254">
    <property type="entry name" value="Flavodoxin/NO_synth"/>
</dbReference>
<dbReference type="InterPro" id="IPR029039">
    <property type="entry name" value="Flavoprotein-like_sf"/>
</dbReference>
<dbReference type="InterPro" id="IPR010089">
    <property type="entry name" value="Flavoprotein_WrbA-like"/>
</dbReference>
<dbReference type="InterPro" id="IPR005025">
    <property type="entry name" value="FMN_Rdtase-like_dom"/>
</dbReference>
<dbReference type="NCBIfam" id="TIGR01755">
    <property type="entry name" value="flav_wrbA"/>
    <property type="match status" value="1"/>
</dbReference>
<dbReference type="NCBIfam" id="NF002999">
    <property type="entry name" value="PRK03767.1"/>
    <property type="match status" value="1"/>
</dbReference>
<dbReference type="PANTHER" id="PTHR30546">
    <property type="entry name" value="FLAVODOXIN-RELATED PROTEIN WRBA-RELATED"/>
    <property type="match status" value="1"/>
</dbReference>
<dbReference type="PANTHER" id="PTHR30546:SF56">
    <property type="entry name" value="NAD(P)H DEHYDROGENASE (QUINONE)"/>
    <property type="match status" value="1"/>
</dbReference>
<dbReference type="Pfam" id="PF03358">
    <property type="entry name" value="FMN_red"/>
    <property type="match status" value="1"/>
</dbReference>
<dbReference type="SUPFAM" id="SSF52218">
    <property type="entry name" value="Flavoproteins"/>
    <property type="match status" value="1"/>
</dbReference>
<dbReference type="PROSITE" id="PS50902">
    <property type="entry name" value="FLAVODOXIN_LIKE"/>
    <property type="match status" value="1"/>
</dbReference>
<evidence type="ECO:0000250" key="1">
    <source>
        <dbReference type="UniProtKB" id="P0A8G6"/>
    </source>
</evidence>
<evidence type="ECO:0000250" key="2">
    <source>
        <dbReference type="UniProtKB" id="Q9LSQ5"/>
    </source>
</evidence>
<evidence type="ECO:0000255" key="3">
    <source>
        <dbReference type="PROSITE-ProRule" id="PRU00088"/>
    </source>
</evidence>
<evidence type="ECO:0000269" key="4">
    <source>
    </source>
</evidence>
<evidence type="ECO:0000269" key="5">
    <source>
    </source>
</evidence>
<evidence type="ECO:0000269" key="6">
    <source ref="2"/>
</evidence>
<evidence type="ECO:0000303" key="7">
    <source>
    </source>
</evidence>
<evidence type="ECO:0000305" key="8"/>
<evidence type="ECO:0000312" key="9">
    <source>
        <dbReference type="EMBL" id="AAG53945.1"/>
    </source>
</evidence>
<sequence length="205" mass="22100">MATKVYIVYYSTYGHVERLAQEIKKGAESVGNVEVKLWQVPEILSDEVLGKMWAPPKSDVPVITPDELVEADGIIFGFPTRFGMMAAQFKAFFDSTGGLWKTQALAGKPAGIFFSTGTQGGGQETTALTAITQLTHHGMIYVPIGYTFGADMFNMEKIKGGSPYGAGTFAGADGSRQPSDIELKQAFHQGMYIAGITKKIKQTSA</sequence>
<organism evidence="9">
    <name type="scientific">Triphysaria versicolor</name>
    <name type="common">Yellow owl's clover</name>
    <dbReference type="NCBI Taxonomy" id="64093"/>
    <lineage>
        <taxon>Eukaryota</taxon>
        <taxon>Viridiplantae</taxon>
        <taxon>Streptophyta</taxon>
        <taxon>Embryophyta</taxon>
        <taxon>Tracheophyta</taxon>
        <taxon>Spermatophyta</taxon>
        <taxon>Magnoliopsida</taxon>
        <taxon>eudicotyledons</taxon>
        <taxon>Gunneridae</taxon>
        <taxon>Pentapetalae</taxon>
        <taxon>asterids</taxon>
        <taxon>lamiids</taxon>
        <taxon>Lamiales</taxon>
        <taxon>Orobanchaceae</taxon>
        <taxon>Pedicularideae</taxon>
        <taxon>Castillejinae</taxon>
        <taxon>Triphysaria</taxon>
    </lineage>
</organism>